<sequence>MTELPDNTRWQLWIVALGFFMQSLDTTIVNTALPSMAKSLGESPLHMHMVVVSYVLTVAVMLPASGWLADKIGVRNIFFAAIVLFTLGSLFCALSGTLNQLVLARVLQGVGGAMMVPVGRLTVMKIVPRAQYMAAMTFVTLPGQIGPLLGPALGGVLVEYASWHWIFLINIPVGIVGAMATFMLMPNYTIETRRFDLPGFLLLAIGMAVLTLALDGSKSMGISPWTLAGLAAGGAAAILLYLLHAKKNSGALFSLRLFCTPTFSLGLLGSFAGRIGSGMLPFMTPVFLQIGLGFSPFHAGLMMIPMVLGSMGMKRIVVQIVNRFGYRRVLVATTLGLALVSLLFMSVALLGWYYLLPLVLLLQGMVNSARFSSMNTLTLKDLPDTLASSGNSLLSMIMQLSMSIGVTIAGMLLGMFGQQHIGIDSSATHHVFMYTWLCMAVIIALPAIIFARVPNDTQQNMVISRRKRSL</sequence>
<reference key="1">
    <citation type="submission" date="2007-11" db="EMBL/GenBank/DDBJ databases">
        <authorList>
            <consortium name="The Salmonella enterica serovar Paratyphi B Genome Sequencing Project"/>
            <person name="McClelland M."/>
            <person name="Sanderson E.K."/>
            <person name="Porwollik S."/>
            <person name="Spieth J."/>
            <person name="Clifton W.S."/>
            <person name="Fulton R."/>
            <person name="Cordes M."/>
            <person name="Wollam A."/>
            <person name="Shah N."/>
            <person name="Pepin K."/>
            <person name="Bhonagiri V."/>
            <person name="Nash W."/>
            <person name="Johnson M."/>
            <person name="Thiruvilangam P."/>
            <person name="Wilson R."/>
        </authorList>
    </citation>
    <scope>NUCLEOTIDE SEQUENCE [LARGE SCALE GENOMIC DNA]</scope>
    <source>
        <strain>ATCC BAA-1250 / SPB7</strain>
    </source>
</reference>
<dbReference type="EMBL" id="CP000886">
    <property type="protein sequence ID" value="ABX66318.1"/>
    <property type="molecule type" value="Genomic_DNA"/>
</dbReference>
<dbReference type="RefSeq" id="WP_000137829.1">
    <property type="nucleotide sequence ID" value="NC_010102.1"/>
</dbReference>
<dbReference type="SMR" id="A9N7L0"/>
<dbReference type="KEGG" id="spq:SPAB_00895"/>
<dbReference type="PATRIC" id="fig|1016998.12.peg.840"/>
<dbReference type="HOGENOM" id="CLU_000960_28_0_6"/>
<dbReference type="BioCyc" id="SENT1016998:SPAB_RS03700-MONOMER"/>
<dbReference type="Proteomes" id="UP000008556">
    <property type="component" value="Chromosome"/>
</dbReference>
<dbReference type="GO" id="GO:0005886">
    <property type="term" value="C:plasma membrane"/>
    <property type="evidence" value="ECO:0007669"/>
    <property type="project" value="UniProtKB-SubCell"/>
</dbReference>
<dbReference type="GO" id="GO:0022857">
    <property type="term" value="F:transmembrane transporter activity"/>
    <property type="evidence" value="ECO:0007669"/>
    <property type="project" value="UniProtKB-UniRule"/>
</dbReference>
<dbReference type="CDD" id="cd17503">
    <property type="entry name" value="MFS_LmrB_MDR_like"/>
    <property type="match status" value="1"/>
</dbReference>
<dbReference type="FunFam" id="1.20.1250.20:FF:000021">
    <property type="entry name" value="Putative multidrug resistance protein MdtD"/>
    <property type="match status" value="1"/>
</dbReference>
<dbReference type="FunFam" id="1.20.1720.10:FF:000001">
    <property type="entry name" value="Putative multidrug resistance protein MdtD"/>
    <property type="match status" value="1"/>
</dbReference>
<dbReference type="Gene3D" id="1.20.1250.20">
    <property type="entry name" value="MFS general substrate transporter like domains"/>
    <property type="match status" value="1"/>
</dbReference>
<dbReference type="Gene3D" id="1.20.1720.10">
    <property type="entry name" value="Multidrug resistance protein D"/>
    <property type="match status" value="1"/>
</dbReference>
<dbReference type="HAMAP" id="MF_01577">
    <property type="entry name" value="MFS_MdtD"/>
    <property type="match status" value="1"/>
</dbReference>
<dbReference type="InterPro" id="IPR011701">
    <property type="entry name" value="MFS"/>
</dbReference>
<dbReference type="InterPro" id="IPR020846">
    <property type="entry name" value="MFS_dom"/>
</dbReference>
<dbReference type="InterPro" id="IPR036259">
    <property type="entry name" value="MFS_trans_sf"/>
</dbReference>
<dbReference type="InterPro" id="IPR023721">
    <property type="entry name" value="Multi-R_MdtD"/>
</dbReference>
<dbReference type="NCBIfam" id="NF007799">
    <property type="entry name" value="PRK10504.1"/>
    <property type="match status" value="1"/>
</dbReference>
<dbReference type="PANTHER" id="PTHR42718:SF46">
    <property type="entry name" value="BLR6921 PROTEIN"/>
    <property type="match status" value="1"/>
</dbReference>
<dbReference type="PANTHER" id="PTHR42718">
    <property type="entry name" value="MAJOR FACILITATOR SUPERFAMILY MULTIDRUG TRANSPORTER MFSC"/>
    <property type="match status" value="1"/>
</dbReference>
<dbReference type="Pfam" id="PF07690">
    <property type="entry name" value="MFS_1"/>
    <property type="match status" value="1"/>
</dbReference>
<dbReference type="PRINTS" id="PR01036">
    <property type="entry name" value="TCRTETB"/>
</dbReference>
<dbReference type="SUPFAM" id="SSF103473">
    <property type="entry name" value="MFS general substrate transporter"/>
    <property type="match status" value="1"/>
</dbReference>
<dbReference type="PROSITE" id="PS50850">
    <property type="entry name" value="MFS"/>
    <property type="match status" value="1"/>
</dbReference>
<proteinExistence type="inferred from homology"/>
<gene>
    <name evidence="1" type="primary">mdtD</name>
    <name type="ordered locus">SPAB_00895</name>
</gene>
<keyword id="KW-0997">Cell inner membrane</keyword>
<keyword id="KW-1003">Cell membrane</keyword>
<keyword id="KW-0472">Membrane</keyword>
<keyword id="KW-0812">Transmembrane</keyword>
<keyword id="KW-1133">Transmembrane helix</keyword>
<keyword id="KW-0813">Transport</keyword>
<accession>A9N7L0</accession>
<feature type="chain" id="PRO_1000087928" description="Putative multidrug resistance protein MdtD">
    <location>
        <begin position="1"/>
        <end position="470"/>
    </location>
</feature>
<feature type="topological domain" description="Periplasmic" evidence="1">
    <location>
        <begin position="1"/>
        <end position="11"/>
    </location>
</feature>
<feature type="transmembrane region" description="Helical" evidence="1">
    <location>
        <begin position="12"/>
        <end position="32"/>
    </location>
</feature>
<feature type="topological domain" description="Cytoplasmic" evidence="1">
    <location>
        <begin position="33"/>
        <end position="48"/>
    </location>
</feature>
<feature type="transmembrane region" description="Helical" evidence="1">
    <location>
        <begin position="49"/>
        <end position="69"/>
    </location>
</feature>
<feature type="topological domain" description="Periplasmic" evidence="1">
    <location>
        <begin position="70"/>
        <end position="76"/>
    </location>
</feature>
<feature type="transmembrane region" description="Helical" evidence="1">
    <location>
        <begin position="77"/>
        <end position="97"/>
    </location>
</feature>
<feature type="topological domain" description="Cytoplasmic" evidence="1">
    <location>
        <begin position="98"/>
        <end position="101"/>
    </location>
</feature>
<feature type="transmembrane region" description="Helical" evidence="1">
    <location>
        <begin position="102"/>
        <end position="124"/>
    </location>
</feature>
<feature type="topological domain" description="Periplasmic" evidence="1">
    <location>
        <begin position="125"/>
        <end position="137"/>
    </location>
</feature>
<feature type="transmembrane region" description="Helical" evidence="1">
    <location>
        <begin position="138"/>
        <end position="158"/>
    </location>
</feature>
<feature type="topological domain" description="Cytoplasmic" evidence="1">
    <location>
        <begin position="159"/>
        <end position="164"/>
    </location>
</feature>
<feature type="transmembrane region" description="Helical" evidence="1">
    <location>
        <begin position="165"/>
        <end position="185"/>
    </location>
</feature>
<feature type="topological domain" description="Periplasmic" evidence="1">
    <location>
        <begin position="186"/>
        <end position="196"/>
    </location>
</feature>
<feature type="transmembrane region" description="Helical" evidence="1">
    <location>
        <begin position="197"/>
        <end position="217"/>
    </location>
</feature>
<feature type="topological domain" description="Cytoplasmic" evidence="1">
    <location>
        <begin position="218"/>
        <end position="221"/>
    </location>
</feature>
<feature type="transmembrane region" description="Helical" evidence="1">
    <location>
        <begin position="222"/>
        <end position="242"/>
    </location>
</feature>
<feature type="topological domain" description="Periplasmic" evidence="1">
    <location>
        <begin position="243"/>
        <end position="262"/>
    </location>
</feature>
<feature type="transmembrane region" description="Helical" evidence="1">
    <location>
        <begin position="263"/>
        <end position="283"/>
    </location>
</feature>
<feature type="topological domain" description="Cytoplasmic" evidence="1">
    <location>
        <begin position="284"/>
        <end position="285"/>
    </location>
</feature>
<feature type="transmembrane region" description="Helical" evidence="1">
    <location>
        <begin position="286"/>
        <end position="306"/>
    </location>
</feature>
<feature type="topological domain" description="Periplasmic" evidence="1">
    <location>
        <begin position="307"/>
        <end position="341"/>
    </location>
</feature>
<feature type="transmembrane region" description="Helical" evidence="1">
    <location>
        <begin position="342"/>
        <end position="362"/>
    </location>
</feature>
<feature type="topological domain" description="Cytoplasmic" evidence="1">
    <location>
        <begin position="363"/>
        <end position="395"/>
    </location>
</feature>
<feature type="transmembrane region" description="Helical" evidence="1">
    <location>
        <begin position="396"/>
        <end position="416"/>
    </location>
</feature>
<feature type="topological domain" description="Periplasmic" evidence="1">
    <location>
        <begin position="417"/>
        <end position="430"/>
    </location>
</feature>
<feature type="transmembrane region" description="Helical" evidence="1">
    <location>
        <begin position="431"/>
        <end position="451"/>
    </location>
</feature>
<feature type="topological domain" description="Cytoplasmic" evidence="1">
    <location>
        <begin position="452"/>
        <end position="470"/>
    </location>
</feature>
<comment type="subcellular location">
    <subcellularLocation>
        <location evidence="1">Cell inner membrane</location>
        <topology evidence="1">Multi-pass membrane protein</topology>
    </subcellularLocation>
</comment>
<comment type="similarity">
    <text evidence="1">Belongs to the major facilitator superfamily. TCR/Tet family.</text>
</comment>
<protein>
    <recommendedName>
        <fullName evidence="1">Putative multidrug resistance protein MdtD</fullName>
    </recommendedName>
</protein>
<organism>
    <name type="scientific">Salmonella paratyphi B (strain ATCC BAA-1250 / SPB7)</name>
    <dbReference type="NCBI Taxonomy" id="1016998"/>
    <lineage>
        <taxon>Bacteria</taxon>
        <taxon>Pseudomonadati</taxon>
        <taxon>Pseudomonadota</taxon>
        <taxon>Gammaproteobacteria</taxon>
        <taxon>Enterobacterales</taxon>
        <taxon>Enterobacteriaceae</taxon>
        <taxon>Salmonella</taxon>
    </lineage>
</organism>
<evidence type="ECO:0000255" key="1">
    <source>
        <dbReference type="HAMAP-Rule" id="MF_01577"/>
    </source>
</evidence>
<name>MDTD_SALPB</name>